<name>COPE2_ORYSJ</name>
<keyword id="KW-0963">Cytoplasm</keyword>
<keyword id="KW-0968">Cytoplasmic vesicle</keyword>
<keyword id="KW-0931">ER-Golgi transport</keyword>
<keyword id="KW-0333">Golgi apparatus</keyword>
<keyword id="KW-0472">Membrane</keyword>
<keyword id="KW-0653">Protein transport</keyword>
<keyword id="KW-1185">Reference proteome</keyword>
<keyword id="KW-0813">Transport</keyword>
<accession>P0C541</accession>
<accession>A0A0P0WFH0</accession>
<accession>Q25A84</accession>
<accession>Q7XTM6</accession>
<protein>
    <recommendedName>
        <fullName>Coatomer subunit epsilon-2</fullName>
    </recommendedName>
    <alternativeName>
        <fullName>Epsilon-coat protein 2</fullName>
        <shortName>Epsilon-COP 2</shortName>
    </alternativeName>
</protein>
<proteinExistence type="inferred from homology"/>
<evidence type="ECO:0000250" key="1"/>
<evidence type="ECO:0000305" key="2"/>
<feature type="chain" id="PRO_0000285626" description="Coatomer subunit epsilon-2">
    <location>
        <begin position="1"/>
        <end position="297"/>
    </location>
</feature>
<organism>
    <name type="scientific">Oryza sativa subsp. japonica</name>
    <name type="common">Rice</name>
    <dbReference type="NCBI Taxonomy" id="39947"/>
    <lineage>
        <taxon>Eukaryota</taxon>
        <taxon>Viridiplantae</taxon>
        <taxon>Streptophyta</taxon>
        <taxon>Embryophyta</taxon>
        <taxon>Tracheophyta</taxon>
        <taxon>Spermatophyta</taxon>
        <taxon>Magnoliopsida</taxon>
        <taxon>Liliopsida</taxon>
        <taxon>Poales</taxon>
        <taxon>Poaceae</taxon>
        <taxon>BOP clade</taxon>
        <taxon>Oryzoideae</taxon>
        <taxon>Oryzeae</taxon>
        <taxon>Oryzinae</taxon>
        <taxon>Oryza</taxon>
        <taxon>Oryza sativa</taxon>
    </lineage>
</organism>
<dbReference type="EMBL" id="AL606454">
    <property type="protein sequence ID" value="CAD41918.2"/>
    <property type="molecule type" value="Genomic_DNA"/>
</dbReference>
<dbReference type="EMBL" id="AP008210">
    <property type="protein sequence ID" value="BAF15974.1"/>
    <property type="molecule type" value="Genomic_DNA"/>
</dbReference>
<dbReference type="EMBL" id="AP014960">
    <property type="protein sequence ID" value="BAS91302.1"/>
    <property type="molecule type" value="Genomic_DNA"/>
</dbReference>
<dbReference type="EMBL" id="CM000141">
    <property type="protein sequence ID" value="EAZ32189.1"/>
    <property type="molecule type" value="Genomic_DNA"/>
</dbReference>
<dbReference type="RefSeq" id="XP_015636608.1">
    <property type="nucleotide sequence ID" value="XM_015781122.1"/>
</dbReference>
<dbReference type="SMR" id="P0C541"/>
<dbReference type="FunCoup" id="P0C541">
    <property type="interactions" value="2599"/>
</dbReference>
<dbReference type="STRING" id="39947.P0C541"/>
<dbReference type="PaxDb" id="39947-P0C541"/>
<dbReference type="EnsemblPlants" id="Os04t0644700-00">
    <property type="protein sequence ID" value="Os04t0644700-00"/>
    <property type="gene ID" value="Os04g0644700"/>
</dbReference>
<dbReference type="Gramene" id="Os04t0644700-00">
    <property type="protein sequence ID" value="Os04t0644700-00"/>
    <property type="gene ID" value="Os04g0644700"/>
</dbReference>
<dbReference type="KEGG" id="dosa:Os04g0644700"/>
<dbReference type="eggNOG" id="KOG3081">
    <property type="taxonomic scope" value="Eukaryota"/>
</dbReference>
<dbReference type="HOGENOM" id="CLU_049363_0_0_1"/>
<dbReference type="InParanoid" id="P0C541"/>
<dbReference type="OMA" id="LAMNVQI"/>
<dbReference type="OrthoDB" id="310217at2759"/>
<dbReference type="Proteomes" id="UP000000763">
    <property type="component" value="Chromosome 4"/>
</dbReference>
<dbReference type="Proteomes" id="UP000007752">
    <property type="component" value="Chromosome 4"/>
</dbReference>
<dbReference type="Proteomes" id="UP000059680">
    <property type="component" value="Chromosome 4"/>
</dbReference>
<dbReference type="GO" id="GO:0030126">
    <property type="term" value="C:COPI vesicle coat"/>
    <property type="evidence" value="ECO:0000318"/>
    <property type="project" value="GO_Central"/>
</dbReference>
<dbReference type="GO" id="GO:0000139">
    <property type="term" value="C:Golgi membrane"/>
    <property type="evidence" value="ECO:0007669"/>
    <property type="project" value="UniProtKB-SubCell"/>
</dbReference>
<dbReference type="GO" id="GO:0005198">
    <property type="term" value="F:structural molecule activity"/>
    <property type="evidence" value="ECO:0007669"/>
    <property type="project" value="InterPro"/>
</dbReference>
<dbReference type="GO" id="GO:0006888">
    <property type="term" value="P:endoplasmic reticulum to Golgi vesicle-mediated transport"/>
    <property type="evidence" value="ECO:0000318"/>
    <property type="project" value="GO_Central"/>
</dbReference>
<dbReference type="GO" id="GO:0006891">
    <property type="term" value="P:intra-Golgi vesicle-mediated transport"/>
    <property type="evidence" value="ECO:0000318"/>
    <property type="project" value="GO_Central"/>
</dbReference>
<dbReference type="GO" id="GO:0015031">
    <property type="term" value="P:protein transport"/>
    <property type="evidence" value="ECO:0007669"/>
    <property type="project" value="UniProtKB-KW"/>
</dbReference>
<dbReference type="GO" id="GO:0006890">
    <property type="term" value="P:retrograde vesicle-mediated transport, Golgi to endoplasmic reticulum"/>
    <property type="evidence" value="ECO:0007669"/>
    <property type="project" value="InterPro"/>
</dbReference>
<dbReference type="FunFam" id="1.25.40.10:FF:000140">
    <property type="entry name" value="Coatomer subunit epsilon"/>
    <property type="match status" value="1"/>
</dbReference>
<dbReference type="Gene3D" id="1.25.40.10">
    <property type="entry name" value="Tetratricopeptide repeat domain"/>
    <property type="match status" value="1"/>
</dbReference>
<dbReference type="InterPro" id="IPR006822">
    <property type="entry name" value="Coatomer_esu"/>
</dbReference>
<dbReference type="InterPro" id="IPR011990">
    <property type="entry name" value="TPR-like_helical_dom_sf"/>
</dbReference>
<dbReference type="PANTHER" id="PTHR10805">
    <property type="entry name" value="COATOMER SUBUNIT EPSILON"/>
    <property type="match status" value="1"/>
</dbReference>
<dbReference type="PANTHER" id="PTHR10805:SF2">
    <property type="entry name" value="COATOMER SUBUNIT EPSILON-2"/>
    <property type="match status" value="1"/>
</dbReference>
<dbReference type="Pfam" id="PF04733">
    <property type="entry name" value="Coatomer_E"/>
    <property type="match status" value="1"/>
</dbReference>
<dbReference type="PIRSF" id="PIRSF016478">
    <property type="entry name" value="Coatomer_esu"/>
    <property type="match status" value="1"/>
</dbReference>
<dbReference type="SUPFAM" id="SSF48452">
    <property type="entry name" value="TPR-like"/>
    <property type="match status" value="1"/>
</dbReference>
<comment type="function">
    <text evidence="1">The coatomer is a cytosolic protein complex that binds to dilysine motifs and reversibly associates with Golgi non-clathrin-coated vesicles, which further mediate biosynthetic protein transport from the ER, via the Golgi up to the trans Golgi network. The coatomer complex is required for budding from Golgi membranes, and is essential for the retrograde Golgi-to-ER transport of dilysine-tagged proteins (By similarity).</text>
</comment>
<comment type="subunit">
    <text evidence="1">Oligomeric complex that consists of at least the alpha, beta, beta', gamma, delta, epsilon and zeta subunits.</text>
</comment>
<comment type="subcellular location">
    <subcellularLocation>
        <location evidence="1">Cytoplasm</location>
    </subcellularLocation>
    <subcellularLocation>
        <location evidence="1">Golgi apparatus membrane</location>
        <topology evidence="1">Peripheral membrane protein</topology>
        <orientation evidence="1">Cytoplasmic side</orientation>
    </subcellularLocation>
    <subcellularLocation>
        <location evidence="1">Cytoplasmic vesicle</location>
        <location evidence="1">COPI-coated vesicle membrane</location>
        <topology evidence="1">Peripheral membrane protein</topology>
        <orientation evidence="1">Cytoplasmic side</orientation>
    </subcellularLocation>
    <text evidence="1">The coatomer is cytoplasmic or polymerized on the cytoplasmic side of the Golgi, as well as on the vesicles/buds originating from it.</text>
</comment>
<comment type="similarity">
    <text evidence="2">Belongs to the COPE family.</text>
</comment>
<gene>
    <name type="ordered locus">Os04g0644700</name>
    <name type="ordered locus">LOC_Os04g55200</name>
    <name type="ORF">OsJ_015672</name>
    <name type="ORF">OSJNBa0033G05.19</name>
</gene>
<reference key="1">
    <citation type="journal article" date="2002" name="Nature">
        <title>Sequence and analysis of rice chromosome 4.</title>
        <authorList>
            <person name="Feng Q."/>
            <person name="Zhang Y."/>
            <person name="Hao P."/>
            <person name="Wang S."/>
            <person name="Fu G."/>
            <person name="Huang Y."/>
            <person name="Li Y."/>
            <person name="Zhu J."/>
            <person name="Liu Y."/>
            <person name="Hu X."/>
            <person name="Jia P."/>
            <person name="Zhang Y."/>
            <person name="Zhao Q."/>
            <person name="Ying K."/>
            <person name="Yu S."/>
            <person name="Tang Y."/>
            <person name="Weng Q."/>
            <person name="Zhang L."/>
            <person name="Lu Y."/>
            <person name="Mu J."/>
            <person name="Lu Y."/>
            <person name="Zhang L.S."/>
            <person name="Yu Z."/>
            <person name="Fan D."/>
            <person name="Liu X."/>
            <person name="Lu T."/>
            <person name="Li C."/>
            <person name="Wu Y."/>
            <person name="Sun T."/>
            <person name="Lei H."/>
            <person name="Li T."/>
            <person name="Hu H."/>
            <person name="Guan J."/>
            <person name="Wu M."/>
            <person name="Zhang R."/>
            <person name="Zhou B."/>
            <person name="Chen Z."/>
            <person name="Chen L."/>
            <person name="Jin Z."/>
            <person name="Wang R."/>
            <person name="Yin H."/>
            <person name="Cai Z."/>
            <person name="Ren S."/>
            <person name="Lv G."/>
            <person name="Gu W."/>
            <person name="Zhu G."/>
            <person name="Tu Y."/>
            <person name="Jia J."/>
            <person name="Zhang Y."/>
            <person name="Chen J."/>
            <person name="Kang H."/>
            <person name="Chen X."/>
            <person name="Shao C."/>
            <person name="Sun Y."/>
            <person name="Hu Q."/>
            <person name="Zhang X."/>
            <person name="Zhang W."/>
            <person name="Wang L."/>
            <person name="Ding C."/>
            <person name="Sheng H."/>
            <person name="Gu J."/>
            <person name="Chen S."/>
            <person name="Ni L."/>
            <person name="Zhu F."/>
            <person name="Chen W."/>
            <person name="Lan L."/>
            <person name="Lai Y."/>
            <person name="Cheng Z."/>
            <person name="Gu M."/>
            <person name="Jiang J."/>
            <person name="Li J."/>
            <person name="Hong G."/>
            <person name="Xue Y."/>
            <person name="Han B."/>
        </authorList>
    </citation>
    <scope>NUCLEOTIDE SEQUENCE [LARGE SCALE GENOMIC DNA]</scope>
    <source>
        <strain>cv. Nipponbare</strain>
    </source>
</reference>
<reference key="2">
    <citation type="journal article" date="2005" name="Nature">
        <title>The map-based sequence of the rice genome.</title>
        <authorList>
            <consortium name="International rice genome sequencing project (IRGSP)"/>
        </authorList>
    </citation>
    <scope>NUCLEOTIDE SEQUENCE [LARGE SCALE GENOMIC DNA]</scope>
    <source>
        <strain>cv. Nipponbare</strain>
    </source>
</reference>
<reference key="3">
    <citation type="journal article" date="2008" name="Nucleic Acids Res.">
        <title>The rice annotation project database (RAP-DB): 2008 update.</title>
        <authorList>
            <consortium name="The rice annotation project (RAP)"/>
        </authorList>
    </citation>
    <scope>GENOME REANNOTATION</scope>
    <source>
        <strain>cv. Nipponbare</strain>
    </source>
</reference>
<reference key="4">
    <citation type="journal article" date="2013" name="Rice">
        <title>Improvement of the Oryza sativa Nipponbare reference genome using next generation sequence and optical map data.</title>
        <authorList>
            <person name="Kawahara Y."/>
            <person name="de la Bastide M."/>
            <person name="Hamilton J.P."/>
            <person name="Kanamori H."/>
            <person name="McCombie W.R."/>
            <person name="Ouyang S."/>
            <person name="Schwartz D.C."/>
            <person name="Tanaka T."/>
            <person name="Wu J."/>
            <person name="Zhou S."/>
            <person name="Childs K.L."/>
            <person name="Davidson R.M."/>
            <person name="Lin H."/>
            <person name="Quesada-Ocampo L."/>
            <person name="Vaillancourt B."/>
            <person name="Sakai H."/>
            <person name="Lee S.S."/>
            <person name="Kim J."/>
            <person name="Numa H."/>
            <person name="Itoh T."/>
            <person name="Buell C.R."/>
            <person name="Matsumoto T."/>
        </authorList>
    </citation>
    <scope>GENOME REANNOTATION</scope>
    <source>
        <strain>cv. Nipponbare</strain>
    </source>
</reference>
<reference key="5">
    <citation type="journal article" date="2005" name="PLoS Biol.">
        <title>The genomes of Oryza sativa: a history of duplications.</title>
        <authorList>
            <person name="Yu J."/>
            <person name="Wang J."/>
            <person name="Lin W."/>
            <person name="Li S."/>
            <person name="Li H."/>
            <person name="Zhou J."/>
            <person name="Ni P."/>
            <person name="Dong W."/>
            <person name="Hu S."/>
            <person name="Zeng C."/>
            <person name="Zhang J."/>
            <person name="Zhang Y."/>
            <person name="Li R."/>
            <person name="Xu Z."/>
            <person name="Li S."/>
            <person name="Li X."/>
            <person name="Zheng H."/>
            <person name="Cong L."/>
            <person name="Lin L."/>
            <person name="Yin J."/>
            <person name="Geng J."/>
            <person name="Li G."/>
            <person name="Shi J."/>
            <person name="Liu J."/>
            <person name="Lv H."/>
            <person name="Li J."/>
            <person name="Wang J."/>
            <person name="Deng Y."/>
            <person name="Ran L."/>
            <person name="Shi X."/>
            <person name="Wang X."/>
            <person name="Wu Q."/>
            <person name="Li C."/>
            <person name="Ren X."/>
            <person name="Wang J."/>
            <person name="Wang X."/>
            <person name="Li D."/>
            <person name="Liu D."/>
            <person name="Zhang X."/>
            <person name="Ji Z."/>
            <person name="Zhao W."/>
            <person name="Sun Y."/>
            <person name="Zhang Z."/>
            <person name="Bao J."/>
            <person name="Han Y."/>
            <person name="Dong L."/>
            <person name="Ji J."/>
            <person name="Chen P."/>
            <person name="Wu S."/>
            <person name="Liu J."/>
            <person name="Xiao Y."/>
            <person name="Bu D."/>
            <person name="Tan J."/>
            <person name="Yang L."/>
            <person name="Ye C."/>
            <person name="Zhang J."/>
            <person name="Xu J."/>
            <person name="Zhou Y."/>
            <person name="Yu Y."/>
            <person name="Zhang B."/>
            <person name="Zhuang S."/>
            <person name="Wei H."/>
            <person name="Liu B."/>
            <person name="Lei M."/>
            <person name="Yu H."/>
            <person name="Li Y."/>
            <person name="Xu H."/>
            <person name="Wei S."/>
            <person name="He X."/>
            <person name="Fang L."/>
            <person name="Zhang Z."/>
            <person name="Zhang Y."/>
            <person name="Huang X."/>
            <person name="Su Z."/>
            <person name="Tong W."/>
            <person name="Li J."/>
            <person name="Tong Z."/>
            <person name="Li S."/>
            <person name="Ye J."/>
            <person name="Wang L."/>
            <person name="Fang L."/>
            <person name="Lei T."/>
            <person name="Chen C.-S."/>
            <person name="Chen H.-C."/>
            <person name="Xu Z."/>
            <person name="Li H."/>
            <person name="Huang H."/>
            <person name="Zhang F."/>
            <person name="Xu H."/>
            <person name="Li N."/>
            <person name="Zhao C."/>
            <person name="Li S."/>
            <person name="Dong L."/>
            <person name="Huang Y."/>
            <person name="Li L."/>
            <person name="Xi Y."/>
            <person name="Qi Q."/>
            <person name="Li W."/>
            <person name="Zhang B."/>
            <person name="Hu W."/>
            <person name="Zhang Y."/>
            <person name="Tian X."/>
            <person name="Jiao Y."/>
            <person name="Liang X."/>
            <person name="Jin J."/>
            <person name="Gao L."/>
            <person name="Zheng W."/>
            <person name="Hao B."/>
            <person name="Liu S.-M."/>
            <person name="Wang W."/>
            <person name="Yuan L."/>
            <person name="Cao M."/>
            <person name="McDermott J."/>
            <person name="Samudrala R."/>
            <person name="Wang J."/>
            <person name="Wong G.K.-S."/>
            <person name="Yang H."/>
        </authorList>
    </citation>
    <scope>NUCLEOTIDE SEQUENCE [LARGE SCALE GENOMIC DNA]</scope>
    <source>
        <strain>cv. Nipponbare</strain>
    </source>
</reference>
<sequence>MAGAASPDHLFGLRNSFYVGAYQAVITGVQAIPARAALSPDALAERDSLLYRSYIAIGSHQLVIDEIGPGAATPLQAVRLLTVYLSGGAGGKESAIRKLNELLADDAVGSNPILRLVAGTVLMHERDYAGALKHTNSGGTMELLAMNVQICLQMHRSDHAEKQLRIMQQLDEDHTLTQLANAWVDLVMGGSKIQEAHLIFQDLSEKYPATCLILNGKALCLMHMGNFEDAEGLLLESLNKDAKDAETLANLVVCSLNLGKSASRYLNQLKLAHPDHMLVKRMSSAEDSFDRACQAIS</sequence>